<sequence length="90" mass="10530">MSSTNETNQVLQRLNSLKIVETPKEQHEFGKRECYSLDSKKYSLVPATPSSSGHGKFQTELKKRRKNKLNRMYTYEADKNFIKARKSLNF</sequence>
<accession>P22469</accession>
<accession>A0JQ32</accession>
<accession>Q4V3M0</accession>
<accession>Q9VUP1</accession>
<comment type="function">
    <text evidence="2 3 4">Cell cycle regulator that is involved in modulating and adjusting cell proliferation according to the requirements of the developmental program (PubMed:10850494, PubMed:12919679, PubMed:17431409). Interacts with mitotic Cdk1-cyclin complexes to inhibit mitotic entry at the G2/M transition (PubMed:17431409). Likely to function by binding to the hydrophobic patch of cyclins to interfere with the interaction between the complex and certain Cdk1 substrates (PubMed:17431409). At the mid-blastula transition, involved in the cell cycle arrest in G2 of cycle 14 by delaying mitosis and thus reducing cell proliferation allowing cell fate specification and morphogenesis to take place (PubMed:12919679). Acts downstream or in parallel to the checkpoint regulator grp which is also required for the cell cycle pause at cycle 14 (PubMed:12919679). During gastrulation, delays mitosis in the ventral region of the embryonic mesoderm thus allowing invagination to be completed before cell division takes place (PubMed:10850494, PubMed:12919679, PubMed:17431409).</text>
</comment>
<comment type="subunit">
    <text evidence="4">Component of the Frs-CycA-Cdk1 complex composed of Z600, CycA and Cdk1. Interacts preferentially with CycA (via C-terminus) but is also able to interact (via C-terminus) with CycE (via C-terminus).</text>
</comment>
<comment type="interaction">
    <interactant intactId="EBI-7376821">
        <id>P22469</id>
    </interactant>
    <interactant intactId="EBI-240333">
        <id>P14785</id>
        <label>CycA</label>
    </interactant>
    <organismsDiffer>false</organismsDiffer>
    <experiments>4</experiments>
</comment>
<comment type="interaction">
    <interactant intactId="EBI-7376821">
        <id>P22469</id>
    </interactant>
    <interactant intactId="EBI-203549">
        <id>P54733</id>
        <label>CycE</label>
    </interactant>
    <organismsDiffer>false</organismsDiffer>
    <experiments>3</experiments>
</comment>
<comment type="subcellular location">
    <subcellularLocation>
        <location evidence="6">Nucleus</location>
    </subcellularLocation>
    <text evidence="6">Associates with chromatin in the syncytial blastoderm.</text>
</comment>
<comment type="developmental stage">
    <text evidence="3 7">Not detected until cycle 14 of embryogenesis when the cleavage cycles are completed (at protein level) (PubMed:12919679). Expression levels peak 15-30 minutes after cellularization and decrease during late cellularization and gastrulation (at protein level) (PubMed:12919679). Expressed until stage 9 in an area of dorsal cells that are probably the amnioserosa anlage (at protein level) (PubMed:12919679). At cycle 13, uniform expression throughout the cortex with expression levels increasing during stage 14 (PubMed:2478402). During cellularization expression localizes dorsally and posteriorly (PubMed:2478402). During gastrulation expression persists in dorsal regions of the embryo and by germ band extension expression is concentrated anterior to the amnioproctodeal invagination and posterior to the forming cephalic furrow (PubMed:2478402).</text>
</comment>
<comment type="disruption phenotype">
    <text evidence="3">Most embryos display premature mitosis resulting in defective invagination of the mesoderm during gastrulation. A small percentage of embryos also display an extra nuclear division prior to cellularization.</text>
</comment>
<organism>
    <name type="scientific">Drosophila melanogaster</name>
    <name type="common">Fruit fly</name>
    <dbReference type="NCBI Taxonomy" id="7227"/>
    <lineage>
        <taxon>Eukaryota</taxon>
        <taxon>Metazoa</taxon>
        <taxon>Ecdysozoa</taxon>
        <taxon>Arthropoda</taxon>
        <taxon>Hexapoda</taxon>
        <taxon>Insecta</taxon>
        <taxon>Pterygota</taxon>
        <taxon>Neoptera</taxon>
        <taxon>Endopterygota</taxon>
        <taxon>Diptera</taxon>
        <taxon>Brachycera</taxon>
        <taxon>Muscomorpha</taxon>
        <taxon>Ephydroidea</taxon>
        <taxon>Drosophilidae</taxon>
        <taxon>Drosophila</taxon>
        <taxon>Sophophora</taxon>
    </lineage>
</organism>
<feature type="chain" id="PRO_0000066559" description="Protein Z600">
    <location>
        <begin position="1"/>
        <end position="90"/>
    </location>
</feature>
<feature type="region of interest" description="Disordered" evidence="1">
    <location>
        <begin position="46"/>
        <end position="65"/>
    </location>
</feature>
<feature type="modified residue" description="Phosphothreonine" evidence="4">
    <location>
        <position position="22"/>
    </location>
</feature>
<feature type="modified residue" description="Phosphothreonine" evidence="4 5">
    <location>
        <position position="48"/>
    </location>
</feature>
<feature type="mutagenesis site" description="No ventral furrow formation during gastrulation and reduced binding to CycA; when associated with A-88." evidence="4">
    <original>K</original>
    <variation>A</variation>
    <location>
        <position position="86"/>
    </location>
</feature>
<feature type="mutagenesis site" description="No ventral furrow formation during gastrulation and reduced binding to CycA; when associated with A-86." evidence="4">
    <original>L</original>
    <variation>A</variation>
    <location>
        <position position="88"/>
    </location>
</feature>
<feature type="sequence conflict" description="In Ref. 1; CAA41222." evidence="10" ref="1">
    <original>H</original>
    <variation>N</variation>
    <location>
        <position position="27"/>
    </location>
</feature>
<dbReference type="EMBL" id="X58286">
    <property type="protein sequence ID" value="CAA41222.1"/>
    <property type="molecule type" value="Genomic_DNA"/>
</dbReference>
<dbReference type="EMBL" id="AE014296">
    <property type="protein sequence ID" value="AAF49634.1"/>
    <property type="molecule type" value="Genomic_DNA"/>
</dbReference>
<dbReference type="EMBL" id="BT023336">
    <property type="protein sequence ID" value="AAY55752.1"/>
    <property type="molecule type" value="mRNA"/>
</dbReference>
<dbReference type="EMBL" id="BT029402">
    <property type="protein sequence ID" value="ABK57059.1"/>
    <property type="molecule type" value="mRNA"/>
</dbReference>
<dbReference type="PIR" id="A30172">
    <property type="entry name" value="A30172"/>
</dbReference>
<dbReference type="RefSeq" id="NP_524083.2">
    <property type="nucleotide sequence ID" value="NM_079359.4"/>
</dbReference>
<dbReference type="BioGRID" id="64994">
    <property type="interactions" value="11"/>
</dbReference>
<dbReference type="FunCoup" id="P22469">
    <property type="interactions" value="10"/>
</dbReference>
<dbReference type="IntAct" id="P22469">
    <property type="interactions" value="13"/>
</dbReference>
<dbReference type="MINT" id="P22469"/>
<dbReference type="STRING" id="7227.FBpp0075304"/>
<dbReference type="iPTMnet" id="P22469"/>
<dbReference type="PaxDb" id="7227-FBpp0075304"/>
<dbReference type="DNASU" id="39673"/>
<dbReference type="EnsemblMetazoa" id="FBtr0075549">
    <property type="protein sequence ID" value="FBpp0075304"/>
    <property type="gene ID" value="FBgn0004052"/>
</dbReference>
<dbReference type="GeneID" id="39673"/>
<dbReference type="KEGG" id="dme:Dmel_CG17962"/>
<dbReference type="UCSC" id="CG17962-RA">
    <property type="organism name" value="d. melanogaster"/>
</dbReference>
<dbReference type="AGR" id="FB:FBgn0004052"/>
<dbReference type="CTD" id="39673"/>
<dbReference type="FlyBase" id="FBgn0004052">
    <property type="gene designation" value="Z600"/>
</dbReference>
<dbReference type="VEuPathDB" id="VectorBase:FBgn0004052"/>
<dbReference type="eggNOG" id="ENOG502TF3Q">
    <property type="taxonomic scope" value="Eukaryota"/>
</dbReference>
<dbReference type="HOGENOM" id="CLU_2443232_0_0_1"/>
<dbReference type="InParanoid" id="P22469"/>
<dbReference type="OMA" id="KRECYSE"/>
<dbReference type="OrthoDB" id="7853942at2759"/>
<dbReference type="PhylomeDB" id="P22469"/>
<dbReference type="SignaLink" id="P22469"/>
<dbReference type="BioGRID-ORCS" id="39673">
    <property type="hits" value="0 hits in 1 CRISPR screen"/>
</dbReference>
<dbReference type="ChiTaRS" id="Z600">
    <property type="organism name" value="fly"/>
</dbReference>
<dbReference type="GenomeRNAi" id="39673"/>
<dbReference type="PRO" id="PR:P22469"/>
<dbReference type="Proteomes" id="UP000000803">
    <property type="component" value="Chromosome 3L"/>
</dbReference>
<dbReference type="Bgee" id="FBgn0004052">
    <property type="expression patterns" value="Expressed in early elongation stage spermatid (Drosophila) in testis and 15 other cell types or tissues"/>
</dbReference>
<dbReference type="GO" id="GO:0005737">
    <property type="term" value="C:cytoplasm"/>
    <property type="evidence" value="ECO:0000314"/>
    <property type="project" value="FlyBase"/>
</dbReference>
<dbReference type="GO" id="GO:0005634">
    <property type="term" value="C:nucleus"/>
    <property type="evidence" value="ECO:0007669"/>
    <property type="project" value="UniProtKB-SubCell"/>
</dbReference>
<dbReference type="GO" id="GO:0030332">
    <property type="term" value="F:cyclin binding"/>
    <property type="evidence" value="ECO:0000353"/>
    <property type="project" value="FlyBase"/>
</dbReference>
<dbReference type="GO" id="GO:0051301">
    <property type="term" value="P:cell division"/>
    <property type="evidence" value="ECO:0007669"/>
    <property type="project" value="UniProtKB-KW"/>
</dbReference>
<dbReference type="GO" id="GO:0007369">
    <property type="term" value="P:gastrulation"/>
    <property type="evidence" value="ECO:0000303"/>
    <property type="project" value="FlyBase"/>
</dbReference>
<dbReference type="GO" id="GO:0010972">
    <property type="term" value="P:negative regulation of G2/M transition of mitotic cell cycle"/>
    <property type="evidence" value="ECO:0000315"/>
    <property type="project" value="FlyBase"/>
</dbReference>
<dbReference type="GO" id="GO:0045839">
    <property type="term" value="P:negative regulation of mitotic nuclear division"/>
    <property type="evidence" value="ECO:0000315"/>
    <property type="project" value="FlyBase"/>
</dbReference>
<dbReference type="GO" id="GO:0007370">
    <property type="term" value="P:ventral furrow formation"/>
    <property type="evidence" value="ECO:0000316"/>
    <property type="project" value="FlyBase"/>
</dbReference>
<keyword id="KW-0131">Cell cycle</keyword>
<keyword id="KW-0132">Cell division</keyword>
<keyword id="KW-0498">Mitosis</keyword>
<keyword id="KW-0539">Nucleus</keyword>
<keyword id="KW-0597">Phosphoprotein</keyword>
<keyword id="KW-1185">Reference proteome</keyword>
<name>Z600_DROME</name>
<gene>
    <name evidence="9 11" type="primary">Z600</name>
    <name evidence="8" type="synonym">frs</name>
    <name evidence="11" type="ORF">CG17962</name>
</gene>
<reference key="1">
    <citation type="journal article" date="1989" name="Genes Dev.">
        <title>Overlapping genes of Drosophila melanogaster: organization of the z600-gonadal-Eip28/29 gene cluster.</title>
        <authorList>
            <person name="Schulz R.A."/>
            <person name="Butler B.A."/>
        </authorList>
    </citation>
    <scope>NUCLEOTIDE SEQUENCE [GENOMIC DNA]</scope>
</reference>
<reference key="2">
    <citation type="journal article" date="2000" name="Science">
        <title>The genome sequence of Drosophila melanogaster.</title>
        <authorList>
            <person name="Adams M.D."/>
            <person name="Celniker S.E."/>
            <person name="Holt R.A."/>
            <person name="Evans C.A."/>
            <person name="Gocayne J.D."/>
            <person name="Amanatides P.G."/>
            <person name="Scherer S.E."/>
            <person name="Li P.W."/>
            <person name="Hoskins R.A."/>
            <person name="Galle R.F."/>
            <person name="George R.A."/>
            <person name="Lewis S.E."/>
            <person name="Richards S."/>
            <person name="Ashburner M."/>
            <person name="Henderson S.N."/>
            <person name="Sutton G.G."/>
            <person name="Wortman J.R."/>
            <person name="Yandell M.D."/>
            <person name="Zhang Q."/>
            <person name="Chen L.X."/>
            <person name="Brandon R.C."/>
            <person name="Rogers Y.-H.C."/>
            <person name="Blazej R.G."/>
            <person name="Champe M."/>
            <person name="Pfeiffer B.D."/>
            <person name="Wan K.H."/>
            <person name="Doyle C."/>
            <person name="Baxter E.G."/>
            <person name="Helt G."/>
            <person name="Nelson C.R."/>
            <person name="Miklos G.L.G."/>
            <person name="Abril J.F."/>
            <person name="Agbayani A."/>
            <person name="An H.-J."/>
            <person name="Andrews-Pfannkoch C."/>
            <person name="Baldwin D."/>
            <person name="Ballew R.M."/>
            <person name="Basu A."/>
            <person name="Baxendale J."/>
            <person name="Bayraktaroglu L."/>
            <person name="Beasley E.M."/>
            <person name="Beeson K.Y."/>
            <person name="Benos P.V."/>
            <person name="Berman B.P."/>
            <person name="Bhandari D."/>
            <person name="Bolshakov S."/>
            <person name="Borkova D."/>
            <person name="Botchan M.R."/>
            <person name="Bouck J."/>
            <person name="Brokstein P."/>
            <person name="Brottier P."/>
            <person name="Burtis K.C."/>
            <person name="Busam D.A."/>
            <person name="Butler H."/>
            <person name="Cadieu E."/>
            <person name="Center A."/>
            <person name="Chandra I."/>
            <person name="Cherry J.M."/>
            <person name="Cawley S."/>
            <person name="Dahlke C."/>
            <person name="Davenport L.B."/>
            <person name="Davies P."/>
            <person name="de Pablos B."/>
            <person name="Delcher A."/>
            <person name="Deng Z."/>
            <person name="Mays A.D."/>
            <person name="Dew I."/>
            <person name="Dietz S.M."/>
            <person name="Dodson K."/>
            <person name="Doup L.E."/>
            <person name="Downes M."/>
            <person name="Dugan-Rocha S."/>
            <person name="Dunkov B.C."/>
            <person name="Dunn P."/>
            <person name="Durbin K.J."/>
            <person name="Evangelista C.C."/>
            <person name="Ferraz C."/>
            <person name="Ferriera S."/>
            <person name="Fleischmann W."/>
            <person name="Fosler C."/>
            <person name="Gabrielian A.E."/>
            <person name="Garg N.S."/>
            <person name="Gelbart W.M."/>
            <person name="Glasser K."/>
            <person name="Glodek A."/>
            <person name="Gong F."/>
            <person name="Gorrell J.H."/>
            <person name="Gu Z."/>
            <person name="Guan P."/>
            <person name="Harris M."/>
            <person name="Harris N.L."/>
            <person name="Harvey D.A."/>
            <person name="Heiman T.J."/>
            <person name="Hernandez J.R."/>
            <person name="Houck J."/>
            <person name="Hostin D."/>
            <person name="Houston K.A."/>
            <person name="Howland T.J."/>
            <person name="Wei M.-H."/>
            <person name="Ibegwam C."/>
            <person name="Jalali M."/>
            <person name="Kalush F."/>
            <person name="Karpen G.H."/>
            <person name="Ke Z."/>
            <person name="Kennison J.A."/>
            <person name="Ketchum K.A."/>
            <person name="Kimmel B.E."/>
            <person name="Kodira C.D."/>
            <person name="Kraft C.L."/>
            <person name="Kravitz S."/>
            <person name="Kulp D."/>
            <person name="Lai Z."/>
            <person name="Lasko P."/>
            <person name="Lei Y."/>
            <person name="Levitsky A.A."/>
            <person name="Li J.H."/>
            <person name="Li Z."/>
            <person name="Liang Y."/>
            <person name="Lin X."/>
            <person name="Liu X."/>
            <person name="Mattei B."/>
            <person name="McIntosh T.C."/>
            <person name="McLeod M.P."/>
            <person name="McPherson D."/>
            <person name="Merkulov G."/>
            <person name="Milshina N.V."/>
            <person name="Mobarry C."/>
            <person name="Morris J."/>
            <person name="Moshrefi A."/>
            <person name="Mount S.M."/>
            <person name="Moy M."/>
            <person name="Murphy B."/>
            <person name="Murphy L."/>
            <person name="Muzny D.M."/>
            <person name="Nelson D.L."/>
            <person name="Nelson D.R."/>
            <person name="Nelson K.A."/>
            <person name="Nixon K."/>
            <person name="Nusskern D.R."/>
            <person name="Pacleb J.M."/>
            <person name="Palazzolo M."/>
            <person name="Pittman G.S."/>
            <person name="Pan S."/>
            <person name="Pollard J."/>
            <person name="Puri V."/>
            <person name="Reese M.G."/>
            <person name="Reinert K."/>
            <person name="Remington K."/>
            <person name="Saunders R.D.C."/>
            <person name="Scheeler F."/>
            <person name="Shen H."/>
            <person name="Shue B.C."/>
            <person name="Siden-Kiamos I."/>
            <person name="Simpson M."/>
            <person name="Skupski M.P."/>
            <person name="Smith T.J."/>
            <person name="Spier E."/>
            <person name="Spradling A.C."/>
            <person name="Stapleton M."/>
            <person name="Strong R."/>
            <person name="Sun E."/>
            <person name="Svirskas R."/>
            <person name="Tector C."/>
            <person name="Turner R."/>
            <person name="Venter E."/>
            <person name="Wang A.H."/>
            <person name="Wang X."/>
            <person name="Wang Z.-Y."/>
            <person name="Wassarman D.A."/>
            <person name="Weinstock G.M."/>
            <person name="Weissenbach J."/>
            <person name="Williams S.M."/>
            <person name="Woodage T."/>
            <person name="Worley K.C."/>
            <person name="Wu D."/>
            <person name="Yang S."/>
            <person name="Yao Q.A."/>
            <person name="Ye J."/>
            <person name="Yeh R.-F."/>
            <person name="Zaveri J.S."/>
            <person name="Zhan M."/>
            <person name="Zhang G."/>
            <person name="Zhao Q."/>
            <person name="Zheng L."/>
            <person name="Zheng X.H."/>
            <person name="Zhong F.N."/>
            <person name="Zhong W."/>
            <person name="Zhou X."/>
            <person name="Zhu S.C."/>
            <person name="Zhu X."/>
            <person name="Smith H.O."/>
            <person name="Gibbs R.A."/>
            <person name="Myers E.W."/>
            <person name="Rubin G.M."/>
            <person name="Venter J.C."/>
        </authorList>
    </citation>
    <scope>NUCLEOTIDE SEQUENCE [LARGE SCALE GENOMIC DNA]</scope>
    <source>
        <strain>Berkeley</strain>
    </source>
</reference>
<reference key="3">
    <citation type="journal article" date="2002" name="Genome Biol.">
        <title>Annotation of the Drosophila melanogaster euchromatic genome: a systematic review.</title>
        <authorList>
            <person name="Misra S."/>
            <person name="Crosby M.A."/>
            <person name="Mungall C.J."/>
            <person name="Matthews B.B."/>
            <person name="Campbell K.S."/>
            <person name="Hradecky P."/>
            <person name="Huang Y."/>
            <person name="Kaminker J.S."/>
            <person name="Millburn G.H."/>
            <person name="Prochnik S.E."/>
            <person name="Smith C.D."/>
            <person name="Tupy J.L."/>
            <person name="Whitfield E.J."/>
            <person name="Bayraktaroglu L."/>
            <person name="Berman B.P."/>
            <person name="Bettencourt B.R."/>
            <person name="Celniker S.E."/>
            <person name="de Grey A.D.N.J."/>
            <person name="Drysdale R.A."/>
            <person name="Harris N.L."/>
            <person name="Richter J."/>
            <person name="Russo S."/>
            <person name="Schroeder A.J."/>
            <person name="Shu S.Q."/>
            <person name="Stapleton M."/>
            <person name="Yamada C."/>
            <person name="Ashburner M."/>
            <person name="Gelbart W.M."/>
            <person name="Rubin G.M."/>
            <person name="Lewis S.E."/>
        </authorList>
    </citation>
    <scope>GENOME REANNOTATION</scope>
    <source>
        <strain>Berkeley</strain>
    </source>
</reference>
<reference key="4">
    <citation type="submission" date="2006-11" db="EMBL/GenBank/DDBJ databases">
        <authorList>
            <person name="Stapleton M."/>
            <person name="Carlson J.W."/>
            <person name="Chavez C."/>
            <person name="Frise E."/>
            <person name="George R.A."/>
            <person name="Kapadia B."/>
            <person name="Pacleb J.M."/>
            <person name="Park S."/>
            <person name="Wan K.H."/>
            <person name="Yu C."/>
            <person name="Celniker S.E."/>
        </authorList>
    </citation>
    <scope>NUCLEOTIDE SEQUENCE [LARGE SCALE MRNA]</scope>
    <source>
        <strain>Berkeley</strain>
    </source>
</reference>
<reference key="5">
    <citation type="journal article" date="1989" name="Dev. Biol.">
        <title>Dorsal expression of the Drosophila z600 gene during early embryogenesis.</title>
        <authorList>
            <person name="Schulz R.A."/>
            <person name="Miksch J.L."/>
        </authorList>
    </citation>
    <scope>DEVELOPMENTAL STAGE</scope>
</reference>
<reference key="6">
    <citation type="journal article" date="1990" name="Gene">
        <title>The Drosophila melanogaster z600 gene encodes a chromatin-associated protein synthesized in the syncytial blastoderm.</title>
        <authorList>
            <person name="Galewsky S."/>
            <person name="Xie X.L."/>
            <person name="Schulz R.A."/>
        </authorList>
    </citation>
    <scope>SUBCELLULAR LOCATION</scope>
</reference>
<reference key="7">
    <citation type="journal article" date="2000" name="Cell">
        <title>A genetic link between morphogenesis and cell division during formation of the ventral furrow in Drosophila.</title>
        <authorList>
            <person name="Grosshans J."/>
            <person name="Wieschaus E."/>
        </authorList>
    </citation>
    <scope>FUNCTION</scope>
</reference>
<reference key="8">
    <citation type="journal article" date="2003" name="Dev. Cell">
        <title>Control of cleavage cycles in Drosophila embryos by fruhstart.</title>
        <authorList>
            <person name="Grosshans J."/>
            <person name="Mueller H.A.J."/>
            <person name="Wieschaus E."/>
        </authorList>
    </citation>
    <scope>FUNCTION</scope>
    <scope>DEVELOPMENTAL STAGE</scope>
    <scope>DISRUPTION PHENOTYPE</scope>
</reference>
<reference key="9">
    <citation type="journal article" date="2007" name="EMBO Rep.">
        <title>The Drosophila mitotic inhibitor Fruehstart specifically binds to the hydrophobic patch of cyclins.</title>
        <authorList>
            <person name="Gawlinski P."/>
            <person name="Nikolay R."/>
            <person name="Goursot C."/>
            <person name="Lawo S."/>
            <person name="Chaurasia B."/>
            <person name="Herz H.M."/>
            <person name="Kussler-Schneider Y."/>
            <person name="Ruppert T."/>
            <person name="Mayer M."/>
            <person name="Grosshans J."/>
        </authorList>
    </citation>
    <scope>FUNCTION</scope>
    <scope>IDENTIFICATION IN A COMPLEX WITH CYCA AND CDK1</scope>
    <scope>INTERACTION WITH CYCE</scope>
    <scope>PHOSPHORYLATION AT THR-22 AND THR-48</scope>
    <scope>MUTAGENESIS OF LYS-86 AND LEU-88</scope>
</reference>
<reference key="10">
    <citation type="journal article" date="2008" name="J. Proteome Res.">
        <title>Phosphoproteome analysis of Drosophila melanogaster embryos.</title>
        <authorList>
            <person name="Zhai B."/>
            <person name="Villen J."/>
            <person name="Beausoleil S.A."/>
            <person name="Mintseris J."/>
            <person name="Gygi S.P."/>
        </authorList>
    </citation>
    <scope>PHOSPHORYLATION [LARGE SCALE ANALYSIS] AT THR-48</scope>
    <scope>IDENTIFICATION BY MASS SPECTROMETRY</scope>
    <source>
        <tissue>Embryo</tissue>
    </source>
</reference>
<protein>
    <recommendedName>
        <fullName evidence="9">Protein Z600</fullName>
    </recommendedName>
    <alternativeName>
        <fullName evidence="8">Protein Fruhstart</fullName>
    </alternativeName>
</protein>
<proteinExistence type="evidence at protein level"/>
<evidence type="ECO:0000256" key="1">
    <source>
        <dbReference type="SAM" id="MobiDB-lite"/>
    </source>
</evidence>
<evidence type="ECO:0000269" key="2">
    <source>
    </source>
</evidence>
<evidence type="ECO:0000269" key="3">
    <source>
    </source>
</evidence>
<evidence type="ECO:0000269" key="4">
    <source>
    </source>
</evidence>
<evidence type="ECO:0000269" key="5">
    <source>
    </source>
</evidence>
<evidence type="ECO:0000269" key="6">
    <source>
    </source>
</evidence>
<evidence type="ECO:0000269" key="7">
    <source>
    </source>
</evidence>
<evidence type="ECO:0000303" key="8">
    <source>
    </source>
</evidence>
<evidence type="ECO:0000303" key="9">
    <source>
    </source>
</evidence>
<evidence type="ECO:0000305" key="10"/>
<evidence type="ECO:0000312" key="11">
    <source>
        <dbReference type="FlyBase" id="FBgn0004052"/>
    </source>
</evidence>